<organism>
    <name type="scientific">Haemophilus ducreyi (strain 35000HP / ATCC 700724)</name>
    <dbReference type="NCBI Taxonomy" id="233412"/>
    <lineage>
        <taxon>Bacteria</taxon>
        <taxon>Pseudomonadati</taxon>
        <taxon>Pseudomonadota</taxon>
        <taxon>Gammaproteobacteria</taxon>
        <taxon>Pasteurellales</taxon>
        <taxon>Pasteurellaceae</taxon>
        <taxon>Haemophilus</taxon>
    </lineage>
</organism>
<gene>
    <name evidence="1" type="primary">lolB</name>
    <name type="ordered locus">HD_1629</name>
</gene>
<proteinExistence type="inferred from homology"/>
<feature type="signal peptide" evidence="1">
    <location>
        <begin position="1"/>
        <end position="17"/>
    </location>
</feature>
<feature type="chain" id="PRO_0000018299" description="Outer-membrane lipoprotein LolB">
    <location>
        <begin position="18"/>
        <end position="209"/>
    </location>
</feature>
<feature type="lipid moiety-binding region" description="N-palmitoyl cysteine" evidence="1">
    <location>
        <position position="18"/>
    </location>
</feature>
<feature type="lipid moiety-binding region" description="S-diacylglycerol cysteine" evidence="1">
    <location>
        <position position="18"/>
    </location>
</feature>
<reference key="1">
    <citation type="submission" date="2003-06" db="EMBL/GenBank/DDBJ databases">
        <title>The complete genome sequence of Haemophilus ducreyi.</title>
        <authorList>
            <person name="Munson R.S. Jr."/>
            <person name="Ray W.C."/>
            <person name="Mahairas G."/>
            <person name="Sabo P."/>
            <person name="Mungur R."/>
            <person name="Johnson L."/>
            <person name="Nguyen D."/>
            <person name="Wang J."/>
            <person name="Forst C."/>
            <person name="Hood L."/>
        </authorList>
    </citation>
    <scope>NUCLEOTIDE SEQUENCE [LARGE SCALE GENOMIC DNA]</scope>
    <source>
        <strain>35000HP / ATCC 700724</strain>
    </source>
</reference>
<name>LOLB_HAEDU</name>
<keyword id="KW-0998">Cell outer membrane</keyword>
<keyword id="KW-0143">Chaperone</keyword>
<keyword id="KW-0449">Lipoprotein</keyword>
<keyword id="KW-0472">Membrane</keyword>
<keyword id="KW-0564">Palmitate</keyword>
<keyword id="KW-0653">Protein transport</keyword>
<keyword id="KW-1185">Reference proteome</keyword>
<keyword id="KW-0732">Signal</keyword>
<keyword id="KW-0813">Transport</keyword>
<sequence>MKKSTLLFSLMAMALSGCNSVLNAPIEVKKLVYQIEHTDPAWQQHLKQLAEIKNYEVKGQFGYISPTERFSAHFDWQYKTPIDFTLALSSNLSTKLLKLQRSHQGLTVSDSEGYSRTEADIHALMQEIIGVSFPIDQFAYWVKGQPAQEGNYIVNEKRQLSQFSYPINQQIWQARYVEYHENRVPYLPKLIVLENGQQTLKIRLDHWNY</sequence>
<accession>Q7VL53</accession>
<dbReference type="EMBL" id="AE017143">
    <property type="protein sequence ID" value="AAP96406.1"/>
    <property type="molecule type" value="Genomic_DNA"/>
</dbReference>
<dbReference type="RefSeq" id="WP_010945438.1">
    <property type="nucleotide sequence ID" value="NC_002940.2"/>
</dbReference>
<dbReference type="SMR" id="Q7VL53"/>
<dbReference type="STRING" id="233412.HD_1629"/>
<dbReference type="KEGG" id="hdu:HD_1629"/>
<dbReference type="eggNOG" id="COG3017">
    <property type="taxonomic scope" value="Bacteria"/>
</dbReference>
<dbReference type="HOGENOM" id="CLU_092816_1_1_6"/>
<dbReference type="OrthoDB" id="9797618at2"/>
<dbReference type="Proteomes" id="UP000001022">
    <property type="component" value="Chromosome"/>
</dbReference>
<dbReference type="GO" id="GO:0009279">
    <property type="term" value="C:cell outer membrane"/>
    <property type="evidence" value="ECO:0007669"/>
    <property type="project" value="UniProtKB-SubCell"/>
</dbReference>
<dbReference type="GO" id="GO:0044874">
    <property type="term" value="P:lipoprotein localization to outer membrane"/>
    <property type="evidence" value="ECO:0007669"/>
    <property type="project" value="UniProtKB-UniRule"/>
</dbReference>
<dbReference type="GO" id="GO:0015031">
    <property type="term" value="P:protein transport"/>
    <property type="evidence" value="ECO:0007669"/>
    <property type="project" value="UniProtKB-KW"/>
</dbReference>
<dbReference type="CDD" id="cd16326">
    <property type="entry name" value="LolB"/>
    <property type="match status" value="1"/>
</dbReference>
<dbReference type="Gene3D" id="2.50.20.10">
    <property type="entry name" value="Lipoprotein localisation LolA/LolB/LppX"/>
    <property type="match status" value="1"/>
</dbReference>
<dbReference type="HAMAP" id="MF_00233">
    <property type="entry name" value="LolB"/>
    <property type="match status" value="1"/>
</dbReference>
<dbReference type="InterPro" id="IPR029046">
    <property type="entry name" value="LolA/LolB/LppX"/>
</dbReference>
<dbReference type="InterPro" id="IPR004565">
    <property type="entry name" value="OM_lipoprot_LolB"/>
</dbReference>
<dbReference type="NCBIfam" id="TIGR00548">
    <property type="entry name" value="lolB"/>
    <property type="match status" value="1"/>
</dbReference>
<dbReference type="Pfam" id="PF03550">
    <property type="entry name" value="LolB"/>
    <property type="match status" value="1"/>
</dbReference>
<dbReference type="SUPFAM" id="SSF89392">
    <property type="entry name" value="Prokaryotic lipoproteins and lipoprotein localization factors"/>
    <property type="match status" value="1"/>
</dbReference>
<dbReference type="PROSITE" id="PS51257">
    <property type="entry name" value="PROKAR_LIPOPROTEIN"/>
    <property type="match status" value="1"/>
</dbReference>
<protein>
    <recommendedName>
        <fullName evidence="1">Outer-membrane lipoprotein LolB</fullName>
    </recommendedName>
</protein>
<comment type="function">
    <text evidence="1">Plays a critical role in the incorporation of lipoproteins in the outer membrane after they are released by the LolA protein.</text>
</comment>
<comment type="subunit">
    <text evidence="1">Monomer.</text>
</comment>
<comment type="subcellular location">
    <subcellularLocation>
        <location evidence="1">Cell outer membrane</location>
        <topology evidence="1">Lipid-anchor</topology>
    </subcellularLocation>
</comment>
<comment type="similarity">
    <text evidence="1">Belongs to the LolB family.</text>
</comment>
<evidence type="ECO:0000255" key="1">
    <source>
        <dbReference type="HAMAP-Rule" id="MF_00233"/>
    </source>
</evidence>